<sequence>MINFSNTLIILNNDVPCELLKKKYSELLIPTIGILDFKKKKIYKKYNNIFLYSYQNYSFLLDLNDNILLKIQKYLNKNGILDINLYLNDKSNNNSGTSKKDHSKIEDINKILKRLRKECLYNGYINISAEQTMSENGIVINIKAENPDFNKSDDDNNLVSSDEEIYEKCEDKKKVVNRVCDNCTCGKKEKAMNLEKIKINDNEVEYNTENVVSSCGNCYLGDAFRCGSCPYKGLPAFQPGENVKLNLNNEQN</sequence>
<evidence type="ECO:0000255" key="1">
    <source>
        <dbReference type="HAMAP-Rule" id="MF_03115"/>
    </source>
</evidence>
<evidence type="ECO:0000312" key="2">
    <source>
        <dbReference type="EMBL" id="VUC54987.1"/>
    </source>
</evidence>
<evidence type="ECO:0000312" key="3">
    <source>
        <dbReference type="Proteomes" id="UP000074855"/>
    </source>
</evidence>
<proteinExistence type="inferred from homology"/>
<accession>Q4YUG2</accession>
<accession>A0A509AH95</accession>
<gene>
    <name type="primary">DRE2</name>
    <name type="ORF">PB000958.02.0</name>
    <name evidence="2" type="ORF">PBANKA_0706000</name>
</gene>
<protein>
    <recommendedName>
        <fullName evidence="1">Anamorsin homolog</fullName>
    </recommendedName>
    <alternativeName>
        <fullName evidence="1">Fe-S cluster assembly protein DRE2 homolog</fullName>
    </alternativeName>
</protein>
<dbReference type="EMBL" id="LK023122">
    <property type="protein sequence ID" value="VUC54987.1"/>
    <property type="molecule type" value="Genomic_DNA"/>
</dbReference>
<dbReference type="STRING" id="5823.A0A509AH95"/>
<dbReference type="VEuPathDB" id="PlasmoDB:PBANKA_0706000"/>
<dbReference type="eggNOG" id="KOG4020">
    <property type="taxonomic scope" value="Eukaryota"/>
</dbReference>
<dbReference type="InParanoid" id="A0A509AH95"/>
<dbReference type="OMA" id="PCELLRK"/>
<dbReference type="Proteomes" id="UP000074855">
    <property type="component" value="Chromosome 7"/>
</dbReference>
<dbReference type="GO" id="GO:0005758">
    <property type="term" value="C:mitochondrial intermembrane space"/>
    <property type="evidence" value="ECO:0007669"/>
    <property type="project" value="UniProtKB-SubCell"/>
</dbReference>
<dbReference type="GO" id="GO:0051537">
    <property type="term" value="F:2 iron, 2 sulfur cluster binding"/>
    <property type="evidence" value="ECO:0007669"/>
    <property type="project" value="UniProtKB-UniRule"/>
</dbReference>
<dbReference type="GO" id="GO:0051539">
    <property type="term" value="F:4 iron, 4 sulfur cluster binding"/>
    <property type="evidence" value="ECO:0007669"/>
    <property type="project" value="UniProtKB-KW"/>
</dbReference>
<dbReference type="GO" id="GO:0009055">
    <property type="term" value="F:electron transfer activity"/>
    <property type="evidence" value="ECO:0007669"/>
    <property type="project" value="UniProtKB-UniRule"/>
</dbReference>
<dbReference type="GO" id="GO:0046872">
    <property type="term" value="F:metal ion binding"/>
    <property type="evidence" value="ECO:0007669"/>
    <property type="project" value="UniProtKB-KW"/>
</dbReference>
<dbReference type="GO" id="GO:0016226">
    <property type="term" value="P:iron-sulfur cluster assembly"/>
    <property type="evidence" value="ECO:0007669"/>
    <property type="project" value="UniProtKB-UniRule"/>
</dbReference>
<dbReference type="HAMAP" id="MF_03115">
    <property type="entry name" value="Anamorsin"/>
    <property type="match status" value="1"/>
</dbReference>
<dbReference type="InterPro" id="IPR007785">
    <property type="entry name" value="Anamorsin"/>
</dbReference>
<dbReference type="InterPro" id="IPR046408">
    <property type="entry name" value="CIAPIN1"/>
</dbReference>
<dbReference type="PANTHER" id="PTHR13273">
    <property type="entry name" value="ANAMORSIN"/>
    <property type="match status" value="1"/>
</dbReference>
<dbReference type="PANTHER" id="PTHR13273:SF14">
    <property type="entry name" value="ANAMORSIN"/>
    <property type="match status" value="1"/>
</dbReference>
<dbReference type="Pfam" id="PF05093">
    <property type="entry name" value="CIAPIN1"/>
    <property type="match status" value="1"/>
</dbReference>
<comment type="function">
    <text evidence="1">Component of the cytosolic iron-sulfur (Fe-S) protein assembly (CIA) machinery. Required for the maturation of extramitochondrial Fe-S proteins. Part of an electron transfer chain functioning in an early step of cytosolic Fe-S biogenesis, facilitating the de novo assembly of a [4Fe-4S] cluster on the cytosolic Fe-S scaffold complex. Electrons are transferred from NADPH via a FAD- and FMN-containing diflavin oxidoreductase. Together with the diflavin oxidoreductase, also required for the assembly of the diferric tyrosyl radical cofactor of ribonucleotide reductase (RNR), probably by providing electrons for reduction during radical cofactor maturation in the catalytic small subunit.</text>
</comment>
<comment type="cofactor">
    <cofactor evidence="1">
        <name>[2Fe-2S] cluster</name>
        <dbReference type="ChEBI" id="CHEBI:190135"/>
    </cofactor>
</comment>
<comment type="cofactor">
    <cofactor evidence="1">
        <name>[4Fe-4S] cluster</name>
        <dbReference type="ChEBI" id="CHEBI:49883"/>
    </cofactor>
</comment>
<comment type="subunit">
    <text evidence="1">Monomer.</text>
</comment>
<comment type="subcellular location">
    <subcellularLocation>
        <location evidence="1">Cytoplasm</location>
    </subcellularLocation>
    <subcellularLocation>
        <location evidence="1">Mitochondrion intermembrane space</location>
    </subcellularLocation>
</comment>
<comment type="domain">
    <text evidence="1">The C-terminal domain binds 2 Fe-S clusters but is otherwise mostly in an intrinsically disordered conformation.</text>
</comment>
<comment type="domain">
    <text evidence="1">The N-terminal domain has structural similarity with S-adenosyl-L-methionine-dependent methyltransferases, but does not bind S-adenosyl-L-methionine. It is required for correct assembly of the 2 Fe-S clusters.</text>
</comment>
<comment type="domain">
    <text evidence="1">The twin Cx2C motifs are involved in the recognition by the mitochondrial MIA40-ERV1 disulfide relay system. The formation of 2 disulfide bonds in the Cx2C motifs through dithiol/disulfide exchange reactions effectively traps the protein in the mitochondrial intermembrane space.</text>
</comment>
<comment type="similarity">
    <text evidence="1">Belongs to the anamorsin family.</text>
</comment>
<feature type="chain" id="PRO_0000392355" description="Anamorsin homolog">
    <location>
        <begin position="1"/>
        <end position="252"/>
    </location>
</feature>
<feature type="region of interest" description="N-terminal SAM-like domain" evidence="1">
    <location>
        <begin position="1"/>
        <end position="153"/>
    </location>
</feature>
<feature type="region of interest" description="Linker" evidence="1">
    <location>
        <begin position="153"/>
        <end position="166"/>
    </location>
</feature>
<feature type="region of interest" description="Fe-S binding site A" evidence="1">
    <location>
        <begin position="169"/>
        <end position="185"/>
    </location>
</feature>
<feature type="region of interest" description="Fe-S binding site B" evidence="1">
    <location>
        <begin position="215"/>
        <end position="229"/>
    </location>
</feature>
<feature type="short sequence motif" description="Cx2C motif 1" evidence="1">
    <location>
        <begin position="215"/>
        <end position="218"/>
    </location>
</feature>
<feature type="short sequence motif" description="Cx2C motif 2" evidence="1">
    <location>
        <begin position="226"/>
        <end position="229"/>
    </location>
</feature>
<feature type="binding site" evidence="1">
    <location>
        <position position="169"/>
    </location>
    <ligand>
        <name>[2Fe-2S] cluster</name>
        <dbReference type="ChEBI" id="CHEBI:190135"/>
    </ligand>
</feature>
<feature type="binding site" evidence="1">
    <location>
        <position position="180"/>
    </location>
    <ligand>
        <name>[2Fe-2S] cluster</name>
        <dbReference type="ChEBI" id="CHEBI:190135"/>
    </ligand>
</feature>
<feature type="binding site" evidence="1">
    <location>
        <position position="183"/>
    </location>
    <ligand>
        <name>[2Fe-2S] cluster</name>
        <dbReference type="ChEBI" id="CHEBI:190135"/>
    </ligand>
</feature>
<feature type="binding site" evidence="1">
    <location>
        <position position="185"/>
    </location>
    <ligand>
        <name>[2Fe-2S] cluster</name>
        <dbReference type="ChEBI" id="CHEBI:190135"/>
    </ligand>
</feature>
<feature type="binding site" evidence="1">
    <location>
        <position position="215"/>
    </location>
    <ligand>
        <name>[4Fe-4S] cluster</name>
        <dbReference type="ChEBI" id="CHEBI:49883"/>
    </ligand>
</feature>
<feature type="binding site" evidence="1">
    <location>
        <position position="218"/>
    </location>
    <ligand>
        <name>[4Fe-4S] cluster</name>
        <dbReference type="ChEBI" id="CHEBI:49883"/>
    </ligand>
</feature>
<feature type="binding site" evidence="1">
    <location>
        <position position="226"/>
    </location>
    <ligand>
        <name>[4Fe-4S] cluster</name>
        <dbReference type="ChEBI" id="CHEBI:49883"/>
    </ligand>
</feature>
<feature type="binding site" evidence="1">
    <location>
        <position position="229"/>
    </location>
    <ligand>
        <name>[4Fe-4S] cluster</name>
        <dbReference type="ChEBI" id="CHEBI:49883"/>
    </ligand>
</feature>
<reference evidence="3" key="1">
    <citation type="journal article" date="2014" name="BMC Biol.">
        <title>A comprehensive evaluation of rodent malaria parasite genomes and gene expression.</title>
        <authorList>
            <person name="Otto T.D."/>
            <person name="Bohme U."/>
            <person name="Jackson A.P."/>
            <person name="Hunt M."/>
            <person name="Franke-Fayard B."/>
            <person name="Hoeijmakers W.A."/>
            <person name="Religa A.A."/>
            <person name="Robertson L."/>
            <person name="Sanders M."/>
            <person name="Ogun S.A."/>
            <person name="Cunningham D."/>
            <person name="Erhart A."/>
            <person name="Billker O."/>
            <person name="Khan S.M."/>
            <person name="Stunnenberg H.G."/>
            <person name="Langhorne J."/>
            <person name="Holder A.A."/>
            <person name="Waters A.P."/>
            <person name="Newbold C.I."/>
            <person name="Pain A."/>
            <person name="Berriman M."/>
            <person name="Janse C.J."/>
        </authorList>
    </citation>
    <scope>NUCLEOTIDE SEQUENCE [LARGE SCALE GENOMIC DNA]</scope>
    <source>
        <strain evidence="3">ANKA</strain>
    </source>
</reference>
<organism>
    <name type="scientific">Plasmodium berghei (strain Anka)</name>
    <dbReference type="NCBI Taxonomy" id="5823"/>
    <lineage>
        <taxon>Eukaryota</taxon>
        <taxon>Sar</taxon>
        <taxon>Alveolata</taxon>
        <taxon>Apicomplexa</taxon>
        <taxon>Aconoidasida</taxon>
        <taxon>Haemosporida</taxon>
        <taxon>Plasmodiidae</taxon>
        <taxon>Plasmodium</taxon>
        <taxon>Plasmodium (Vinckeia)</taxon>
    </lineage>
</organism>
<keyword id="KW-0001">2Fe-2S</keyword>
<keyword id="KW-0004">4Fe-4S</keyword>
<keyword id="KW-0963">Cytoplasm</keyword>
<keyword id="KW-0408">Iron</keyword>
<keyword id="KW-0411">Iron-sulfur</keyword>
<keyword id="KW-0479">Metal-binding</keyword>
<keyword id="KW-0496">Mitochondrion</keyword>
<keyword id="KW-1185">Reference proteome</keyword>
<name>DRE2_PLABA</name>